<proteinExistence type="inferred from homology"/>
<keyword id="KW-0175">Coiled coil</keyword>
<keyword id="KW-0333">Golgi apparatus</keyword>
<keyword id="KW-0472">Membrane</keyword>
<keyword id="KW-1185">Reference proteome</keyword>
<keyword id="KW-0812">Transmembrane</keyword>
<keyword id="KW-1133">Transmembrane helix</keyword>
<keyword id="KW-0813">Transport</keyword>
<feature type="chain" id="PRO_0000310337" description="Protein CASP">
    <location>
        <begin position="1"/>
        <end position="633"/>
    </location>
</feature>
<feature type="topological domain" description="Cytoplasmic" evidence="2">
    <location>
        <begin position="1"/>
        <end position="601"/>
    </location>
</feature>
<feature type="transmembrane region" description="Helical; Anchor for type IV membrane protein" evidence="2">
    <location>
        <begin position="602"/>
        <end position="622"/>
    </location>
</feature>
<feature type="topological domain" description="Lumenal" evidence="2">
    <location>
        <begin position="623"/>
        <end position="633"/>
    </location>
</feature>
<feature type="region of interest" description="Disordered" evidence="3">
    <location>
        <begin position="39"/>
        <end position="60"/>
    </location>
</feature>
<feature type="coiled-coil region" evidence="2">
    <location>
        <begin position="111"/>
        <end position="339"/>
    </location>
</feature>
<feature type="coiled-coil region" evidence="2">
    <location>
        <begin position="369"/>
        <end position="433"/>
    </location>
</feature>
<sequence>MAVASEALLQKLTESWKNSRFEELQREADEAAAEIEKMQKTSLDERKELSSKTKEFRKQPDEVKLGEMKGLLKLYQSGIDSLTKRAKSAEATFFRVYETLGEVPDPYPLLIEAANNLKTQKQIEDLKKEKEEMEGSLQGKEKLEREVENLRKELDKYKDLVETEAEKRAAITKEECEKSWLEQQKLYKDMEQENASTIQKLTSKIRELQASQLDHDLQASQNESAGLDVNAKSAEVNAILSELDDANKIIVELQAEIAVLKQNTKEQKSGSSQDDLSNQQKQQLDFMDSLNKKLSTELESIKEASRKEMETHCATIQTLENEVKEARKVKEESLTLANKFSDYDEIKRELSVLKQIEFSGEHATHENTSLESQLLKREKQLSEELAKLRSTNAQLTDRITQESKKASFLEQKASEQEEVIRKLEKDLADVDVEGSVYLSNTTYRREGTSGQLSPTSSIMGGNPSLFNGSVLSRNSVNETGSAIVDVIKQQRDRFRRANVTLVNQVSAANDKIALLESKLEEVEKSNTLLYEQMRFRDHYQKHVEPSSSHLQTAAAYENSISPFASFRKKEAERAYSRMGSFERIVYALLRTLLFSRATRGLFFMYLILLHLFIMIVLLKLGIAGNTAYTPMNY</sequence>
<name>CASP_SCHPO</name>
<reference key="1">
    <citation type="journal article" date="2002" name="Nature">
        <title>The genome sequence of Schizosaccharomyces pombe.</title>
        <authorList>
            <person name="Wood V."/>
            <person name="Gwilliam R."/>
            <person name="Rajandream M.A."/>
            <person name="Lyne M.H."/>
            <person name="Lyne R."/>
            <person name="Stewart A."/>
            <person name="Sgouros J.G."/>
            <person name="Peat N."/>
            <person name="Hayles J."/>
            <person name="Baker S.G."/>
            <person name="Basham D."/>
            <person name="Bowman S."/>
            <person name="Brooks K."/>
            <person name="Brown D."/>
            <person name="Brown S."/>
            <person name="Chillingworth T."/>
            <person name="Churcher C.M."/>
            <person name="Collins M."/>
            <person name="Connor R."/>
            <person name="Cronin A."/>
            <person name="Davis P."/>
            <person name="Feltwell T."/>
            <person name="Fraser A."/>
            <person name="Gentles S."/>
            <person name="Goble A."/>
            <person name="Hamlin N."/>
            <person name="Harris D.E."/>
            <person name="Hidalgo J."/>
            <person name="Hodgson G."/>
            <person name="Holroyd S."/>
            <person name="Hornsby T."/>
            <person name="Howarth S."/>
            <person name="Huckle E.J."/>
            <person name="Hunt S."/>
            <person name="Jagels K."/>
            <person name="James K.D."/>
            <person name="Jones L."/>
            <person name="Jones M."/>
            <person name="Leather S."/>
            <person name="McDonald S."/>
            <person name="McLean J."/>
            <person name="Mooney P."/>
            <person name="Moule S."/>
            <person name="Mungall K.L."/>
            <person name="Murphy L.D."/>
            <person name="Niblett D."/>
            <person name="Odell C."/>
            <person name="Oliver K."/>
            <person name="O'Neil S."/>
            <person name="Pearson D."/>
            <person name="Quail M.A."/>
            <person name="Rabbinowitsch E."/>
            <person name="Rutherford K.M."/>
            <person name="Rutter S."/>
            <person name="Saunders D."/>
            <person name="Seeger K."/>
            <person name="Sharp S."/>
            <person name="Skelton J."/>
            <person name="Simmonds M.N."/>
            <person name="Squares R."/>
            <person name="Squares S."/>
            <person name="Stevens K."/>
            <person name="Taylor K."/>
            <person name="Taylor R.G."/>
            <person name="Tivey A."/>
            <person name="Walsh S.V."/>
            <person name="Warren T."/>
            <person name="Whitehead S."/>
            <person name="Woodward J.R."/>
            <person name="Volckaert G."/>
            <person name="Aert R."/>
            <person name="Robben J."/>
            <person name="Grymonprez B."/>
            <person name="Weltjens I."/>
            <person name="Vanstreels E."/>
            <person name="Rieger M."/>
            <person name="Schaefer M."/>
            <person name="Mueller-Auer S."/>
            <person name="Gabel C."/>
            <person name="Fuchs M."/>
            <person name="Duesterhoeft A."/>
            <person name="Fritzc C."/>
            <person name="Holzer E."/>
            <person name="Moestl D."/>
            <person name="Hilbert H."/>
            <person name="Borzym K."/>
            <person name="Langer I."/>
            <person name="Beck A."/>
            <person name="Lehrach H."/>
            <person name="Reinhardt R."/>
            <person name="Pohl T.M."/>
            <person name="Eger P."/>
            <person name="Zimmermann W."/>
            <person name="Wedler H."/>
            <person name="Wambutt R."/>
            <person name="Purnelle B."/>
            <person name="Goffeau A."/>
            <person name="Cadieu E."/>
            <person name="Dreano S."/>
            <person name="Gloux S."/>
            <person name="Lelaure V."/>
            <person name="Mottier S."/>
            <person name="Galibert F."/>
            <person name="Aves S.J."/>
            <person name="Xiang Z."/>
            <person name="Hunt C."/>
            <person name="Moore K."/>
            <person name="Hurst S.M."/>
            <person name="Lucas M."/>
            <person name="Rochet M."/>
            <person name="Gaillardin C."/>
            <person name="Tallada V.A."/>
            <person name="Garzon A."/>
            <person name="Thode G."/>
            <person name="Daga R.R."/>
            <person name="Cruzado L."/>
            <person name="Jimenez J."/>
            <person name="Sanchez M."/>
            <person name="del Rey F."/>
            <person name="Benito J."/>
            <person name="Dominguez A."/>
            <person name="Revuelta J.L."/>
            <person name="Moreno S."/>
            <person name="Armstrong J."/>
            <person name="Forsburg S.L."/>
            <person name="Cerutti L."/>
            <person name="Lowe T."/>
            <person name="McCombie W.R."/>
            <person name="Paulsen I."/>
            <person name="Potashkin J."/>
            <person name="Shpakovski G.V."/>
            <person name="Ussery D."/>
            <person name="Barrell B.G."/>
            <person name="Nurse P."/>
        </authorList>
    </citation>
    <scope>NUCLEOTIDE SEQUENCE [LARGE SCALE GENOMIC DNA]</scope>
    <source>
        <strain>972 / ATCC 24843</strain>
    </source>
</reference>
<evidence type="ECO:0000250" key="1"/>
<evidence type="ECO:0000255" key="2"/>
<evidence type="ECO:0000256" key="3">
    <source>
        <dbReference type="SAM" id="MobiDB-lite"/>
    </source>
</evidence>
<evidence type="ECO:0000305" key="4"/>
<comment type="function">
    <text evidence="1">May be involved in intra-Golgi transport.</text>
</comment>
<comment type="subcellular location">
    <subcellularLocation>
        <location evidence="1">Golgi apparatus membrane</location>
        <topology evidence="1">Single-pass type IV membrane protein</topology>
    </subcellularLocation>
</comment>
<comment type="similarity">
    <text evidence="4">Belongs to the CASP family.</text>
</comment>
<organism>
    <name type="scientific">Schizosaccharomyces pombe (strain 972 / ATCC 24843)</name>
    <name type="common">Fission yeast</name>
    <dbReference type="NCBI Taxonomy" id="284812"/>
    <lineage>
        <taxon>Eukaryota</taxon>
        <taxon>Fungi</taxon>
        <taxon>Dikarya</taxon>
        <taxon>Ascomycota</taxon>
        <taxon>Taphrinomycotina</taxon>
        <taxon>Schizosaccharomycetes</taxon>
        <taxon>Schizosaccharomycetales</taxon>
        <taxon>Schizosaccharomycetaceae</taxon>
        <taxon>Schizosaccharomyces</taxon>
    </lineage>
</organism>
<protein>
    <recommendedName>
        <fullName>Protein CASP</fullName>
    </recommendedName>
</protein>
<accession>O59795</accession>
<dbReference type="EMBL" id="CU329672">
    <property type="protein sequence ID" value="CAA18286.1"/>
    <property type="molecule type" value="Genomic_DNA"/>
</dbReference>
<dbReference type="PIR" id="T41332">
    <property type="entry name" value="T41332"/>
</dbReference>
<dbReference type="RefSeq" id="NP_587840.1">
    <property type="nucleotide sequence ID" value="NM_001022833.2"/>
</dbReference>
<dbReference type="SMR" id="O59795"/>
<dbReference type="BioGRID" id="276039">
    <property type="interactions" value="10"/>
</dbReference>
<dbReference type="FunCoup" id="O59795">
    <property type="interactions" value="136"/>
</dbReference>
<dbReference type="STRING" id="284812.O59795"/>
<dbReference type="iPTMnet" id="O59795"/>
<dbReference type="PaxDb" id="4896-SPCC364.04c.1"/>
<dbReference type="EnsemblFungi" id="SPCC364.04c.1">
    <property type="protein sequence ID" value="SPCC364.04c.1:pep"/>
    <property type="gene ID" value="SPCC364.04c"/>
</dbReference>
<dbReference type="GeneID" id="2539476"/>
<dbReference type="KEGG" id="spo:2539476"/>
<dbReference type="PomBase" id="SPCC364.04c">
    <property type="gene designation" value="coy1"/>
</dbReference>
<dbReference type="VEuPathDB" id="FungiDB:SPCC364.04c"/>
<dbReference type="eggNOG" id="KOG0963">
    <property type="taxonomic scope" value="Eukaryota"/>
</dbReference>
<dbReference type="HOGENOM" id="CLU_016758_0_0_1"/>
<dbReference type="InParanoid" id="O59795"/>
<dbReference type="OMA" id="WQQEGFN"/>
<dbReference type="PhylomeDB" id="O59795"/>
<dbReference type="PRO" id="PR:O59795"/>
<dbReference type="Proteomes" id="UP000002485">
    <property type="component" value="Chromosome III"/>
</dbReference>
<dbReference type="GO" id="GO:0000139">
    <property type="term" value="C:Golgi membrane"/>
    <property type="evidence" value="ECO:0000266"/>
    <property type="project" value="PomBase"/>
</dbReference>
<dbReference type="GO" id="GO:0006891">
    <property type="term" value="P:intra-Golgi vesicle-mediated transport"/>
    <property type="evidence" value="ECO:0007669"/>
    <property type="project" value="InterPro"/>
</dbReference>
<dbReference type="InterPro" id="IPR012955">
    <property type="entry name" value="CASP_C"/>
</dbReference>
<dbReference type="PANTHER" id="PTHR14043">
    <property type="entry name" value="CCAAT DISPLACEMENT PROTEIN-RELATED"/>
    <property type="match status" value="1"/>
</dbReference>
<dbReference type="PANTHER" id="PTHR14043:SF2">
    <property type="entry name" value="HOMEOBOX PROTEIN CUT"/>
    <property type="match status" value="1"/>
</dbReference>
<dbReference type="Pfam" id="PF08172">
    <property type="entry name" value="CASP_C"/>
    <property type="match status" value="1"/>
</dbReference>
<dbReference type="Pfam" id="PF25398">
    <property type="entry name" value="CUX1_N"/>
    <property type="match status" value="1"/>
</dbReference>
<gene>
    <name type="primary">coy1</name>
    <name type="ORF">SPCC364.04c</name>
</gene>